<name>VKT2I_RADCR</name>
<feature type="signal peptide" evidence="3">
    <location>
        <begin position="1"/>
        <end position="22"/>
    </location>
</feature>
<feature type="propeptide" id="PRO_0000453028" evidence="9">
    <location>
        <begin position="23"/>
        <end position="29"/>
    </location>
</feature>
<feature type="chain" id="PRO_5025489489" description="PI-stichotoxin-Hcr2i" evidence="9">
    <location>
        <begin position="28"/>
        <end position="85"/>
    </location>
</feature>
<feature type="domain" description="BPTI/Kunitz inhibitor" evidence="4">
    <location>
        <begin position="33"/>
        <end position="83"/>
    </location>
</feature>
<feature type="site" description="Reactive bond for trypsin" evidence="2">
    <location>
        <begin position="43"/>
        <end position="44"/>
    </location>
</feature>
<feature type="site" description="Important for the stabilization when complexed with trypsin" evidence="1">
    <location>
        <position position="74"/>
    </location>
</feature>
<feature type="disulfide bond" evidence="2">
    <location>
        <begin position="33"/>
        <end position="83"/>
    </location>
</feature>
<feature type="disulfide bond" evidence="2">
    <location>
        <begin position="42"/>
        <end position="66"/>
    </location>
</feature>
<feature type="disulfide bond" evidence="2">
    <location>
        <begin position="58"/>
        <end position="79"/>
    </location>
</feature>
<feature type="turn" evidence="10">
    <location>
        <begin position="30"/>
        <end position="34"/>
    </location>
</feature>
<feature type="strand" evidence="10">
    <location>
        <begin position="49"/>
        <end position="51"/>
    </location>
</feature>
<feature type="turn" evidence="10">
    <location>
        <begin position="53"/>
        <end position="55"/>
    </location>
</feature>
<feature type="strand" evidence="10">
    <location>
        <begin position="56"/>
        <end position="59"/>
    </location>
</feature>
<feature type="strand" evidence="10">
    <location>
        <begin position="73"/>
        <end position="75"/>
    </location>
</feature>
<feature type="helix" evidence="10">
    <location>
        <begin position="76"/>
        <end position="83"/>
    </location>
</feature>
<sequence length="85" mass="9552">MKGTFLICLILIAGFYFRSIQGFYFKRIQGNICSEPKKVGRCRGSFPRFYFDSETGKCTPFIYGGCGGNGNNFETLHACRAICRA</sequence>
<protein>
    <recommendedName>
        <fullName evidence="8">PI-stichotoxin-Hcr2i</fullName>
        <shortName evidence="8">PI-SHTX-Hcr2i</shortName>
    </recommendedName>
    <alternativeName>
        <fullName evidence="7">Kunitz-peptide HCIQ2c1</fullName>
    </alternativeName>
</protein>
<evidence type="ECO:0000250" key="1">
    <source>
        <dbReference type="UniProtKB" id="P0DMJ5"/>
    </source>
</evidence>
<evidence type="ECO:0000250" key="2">
    <source>
        <dbReference type="UniProtKB" id="P31713"/>
    </source>
</evidence>
<evidence type="ECO:0000255" key="3"/>
<evidence type="ECO:0000255" key="4">
    <source>
        <dbReference type="PROSITE-ProRule" id="PRU00031"/>
    </source>
</evidence>
<evidence type="ECO:0000269" key="5">
    <source>
    </source>
</evidence>
<evidence type="ECO:0000269" key="6">
    <source>
    </source>
</evidence>
<evidence type="ECO:0000303" key="7">
    <source>
    </source>
</evidence>
<evidence type="ECO:0000305" key="8"/>
<evidence type="ECO:0000305" key="9">
    <source>
    </source>
</evidence>
<evidence type="ECO:0007829" key="10">
    <source>
        <dbReference type="PDB" id="9IJW"/>
    </source>
</evidence>
<reference key="1">
    <citation type="journal article" date="2020" name="Sci. Rep.">
        <title>A new multigene HCIQ subfamily from the sea anemone Heteractis crispa encodes Kunitz-peptides exhibiting neuroprotective activity against 6-hydroxydopamine.</title>
        <authorList>
            <person name="Kvetkina A."/>
            <person name="Leychenko E."/>
            <person name="Chausova V."/>
            <person name="Zelepuga E."/>
            <person name="Chernysheva N."/>
            <person name="Guzev K."/>
            <person name="Pislyagin E."/>
            <person name="Yurchenko E."/>
            <person name="Menchinskaya E."/>
            <person name="Aminin D."/>
            <person name="Kaluzhskiy L."/>
            <person name="Ivanov A."/>
            <person name="Peigneur S."/>
            <person name="Tytgat J."/>
            <person name="Kozlovskaya E."/>
            <person name="Isaeva M."/>
        </authorList>
    </citation>
    <scope>NUCLEOTIDE SEQUENCE [MRNA]</scope>
    <scope>FUNCTION</scope>
    <scope>RECOMBINANT EXPRESSION</scope>
</reference>
<reference key="2">
    <citation type="journal article" date="2022" name="Int. J. Mol. Sci.">
        <title>Kunitz-type peptides from sea anemones protect neuronal cells against parkinson's disease inductors via inhibition of ROS production and atp-induced P2X7 receptor activation.</title>
        <authorList>
            <person name="Kvetkina A."/>
            <person name="Pislyagin E."/>
            <person name="Menchinskaya E."/>
            <person name="Yurchenko E."/>
            <person name="Kalina R."/>
            <person name="Kozlovskiy S."/>
            <person name="Kaluzhskiy L."/>
            <person name="Menshov A."/>
            <person name="Kim N."/>
            <person name="Peigneur S."/>
            <person name="Tytgat J."/>
            <person name="Ivanov A."/>
            <person name="Ayvazyan N."/>
            <person name="Leychenko E."/>
            <person name="Aminin D."/>
        </authorList>
    </citation>
    <scope>3D-STRUCTURE MODELING IN COMPLEX WITH TRYPSIN</scope>
    <scope>BIOPHYSICOCHEMICAL PROPERTIES</scope>
</reference>
<proteinExistence type="evidence at protein level"/>
<organism>
    <name type="scientific">Radianthus crispa</name>
    <name type="common">Leathery sea anemone</name>
    <name type="synonym">Heteractis crispa</name>
    <dbReference type="NCBI Taxonomy" id="3122430"/>
    <lineage>
        <taxon>Eukaryota</taxon>
        <taxon>Metazoa</taxon>
        <taxon>Cnidaria</taxon>
        <taxon>Anthozoa</taxon>
        <taxon>Hexacorallia</taxon>
        <taxon>Actiniaria</taxon>
        <taxon>Stichodactylidae</taxon>
        <taxon>Radianthus</taxon>
    </lineage>
</organism>
<keyword id="KW-0002">3D-structure</keyword>
<keyword id="KW-0165">Cleavage on pair of basic residues</keyword>
<keyword id="KW-1015">Disulfide bond</keyword>
<keyword id="KW-0872">Ion channel impairing toxin</keyword>
<keyword id="KW-0166">Nematocyst</keyword>
<keyword id="KW-0646">Protease inhibitor</keyword>
<keyword id="KW-0964">Secreted</keyword>
<keyword id="KW-0722">Serine protease inhibitor</keyword>
<keyword id="KW-0732">Signal</keyword>
<keyword id="KW-0800">Toxin</keyword>
<accession>A0A6B7FBD3</accession>
<comment type="function">
    <text evidence="5 6">Serine protease inhibitor that also shows protective effect in a cytotoxicity model (PubMed:32144281). It binds to all proteases tested (trypsin (Ki=52 nM), alpha-chymotrypsin, cathepsin G, kallikrein, and human neutrophil elastase) (PubMed:32144281). It significantly increases neuroblastoma cell viability in an in vitro neurotoxicity model, being a consequence of an effective decrease of reactive oxygen species (ROS) level in the cells (PubMed:32144281, PubMed:35563513). It also seems to protect cells by inhibiting ATP-induced purinoceptor (P2RX7) activation (PubMed:35563513).</text>
</comment>
<comment type="biophysicochemical properties">
    <temperatureDependence>
        <text evidence="6">Thermostable. Complete trypsin inhibition at all temperature ranges (25-100 degrees Celsius).</text>
    </temperatureDependence>
</comment>
<comment type="subcellular location">
    <subcellularLocation>
        <location evidence="2">Secreted</location>
    </subcellularLocation>
    <subcellularLocation>
        <location evidence="2">Nematocyst</location>
    </subcellularLocation>
</comment>
<comment type="miscellaneous">
    <text evidence="5">Negative results: does not show activity on all potassium channel tested (Kv1.1/KCNA1, Kv1.2/KCNA2, Kv1.3/KCNA3, Kv1.4/KCNA4, Kv1.5/KCNA5, Kv1.6/KCNA8, Shaker IR, and Kv11.1/KCNH2/ERG1).</text>
</comment>
<comment type="miscellaneous">
    <text evidence="8">A synonymy between H.magnifica and R.crispa is controversial.</text>
</comment>
<comment type="similarity">
    <text evidence="8">Belongs to the venom Kunitz-type family. Sea anemone type 2 potassium channel toxin subfamily.</text>
</comment>
<dbReference type="EMBL" id="MH249934">
    <property type="protein sequence ID" value="QBA29483.1"/>
    <property type="molecule type" value="mRNA"/>
</dbReference>
<dbReference type="PDB" id="9IJW">
    <property type="method" value="NMR"/>
    <property type="chains" value="A=28-85"/>
</dbReference>
<dbReference type="PDBsum" id="9IJW"/>
<dbReference type="SMR" id="A0A6B7FBD3"/>
<dbReference type="GO" id="GO:0005615">
    <property type="term" value="C:extracellular space"/>
    <property type="evidence" value="ECO:0007669"/>
    <property type="project" value="TreeGrafter"/>
</dbReference>
<dbReference type="GO" id="GO:0042151">
    <property type="term" value="C:nematocyst"/>
    <property type="evidence" value="ECO:0007669"/>
    <property type="project" value="UniProtKB-SubCell"/>
</dbReference>
<dbReference type="GO" id="GO:0099106">
    <property type="term" value="F:ion channel regulator activity"/>
    <property type="evidence" value="ECO:0007669"/>
    <property type="project" value="UniProtKB-KW"/>
</dbReference>
<dbReference type="GO" id="GO:0004867">
    <property type="term" value="F:serine-type endopeptidase inhibitor activity"/>
    <property type="evidence" value="ECO:0007669"/>
    <property type="project" value="UniProtKB-KW"/>
</dbReference>
<dbReference type="GO" id="GO:0090729">
    <property type="term" value="F:toxin activity"/>
    <property type="evidence" value="ECO:0007669"/>
    <property type="project" value="UniProtKB-KW"/>
</dbReference>
<dbReference type="CDD" id="cd22618">
    <property type="entry name" value="Kunitz_SHPI"/>
    <property type="match status" value="1"/>
</dbReference>
<dbReference type="FunFam" id="4.10.410.10:FF:000021">
    <property type="entry name" value="Serine protease inhibitor, putative"/>
    <property type="match status" value="1"/>
</dbReference>
<dbReference type="Gene3D" id="4.10.410.10">
    <property type="entry name" value="Pancreatic trypsin inhibitor Kunitz domain"/>
    <property type="match status" value="1"/>
</dbReference>
<dbReference type="InterPro" id="IPR002223">
    <property type="entry name" value="Kunitz_BPTI"/>
</dbReference>
<dbReference type="InterPro" id="IPR036880">
    <property type="entry name" value="Kunitz_BPTI_sf"/>
</dbReference>
<dbReference type="InterPro" id="IPR020901">
    <property type="entry name" value="Prtase_inh_Kunz-CS"/>
</dbReference>
<dbReference type="InterPro" id="IPR050098">
    <property type="entry name" value="TFPI/VKTCI-like"/>
</dbReference>
<dbReference type="PANTHER" id="PTHR10083:SF374">
    <property type="entry name" value="BPTI_KUNITZ INHIBITOR DOMAIN-CONTAINING PROTEIN"/>
    <property type="match status" value="1"/>
</dbReference>
<dbReference type="PANTHER" id="PTHR10083">
    <property type="entry name" value="KUNITZ-TYPE PROTEASE INHIBITOR-RELATED"/>
    <property type="match status" value="1"/>
</dbReference>
<dbReference type="Pfam" id="PF00014">
    <property type="entry name" value="Kunitz_BPTI"/>
    <property type="match status" value="1"/>
</dbReference>
<dbReference type="PRINTS" id="PR00759">
    <property type="entry name" value="BASICPTASE"/>
</dbReference>
<dbReference type="SMART" id="SM00131">
    <property type="entry name" value="KU"/>
    <property type="match status" value="1"/>
</dbReference>
<dbReference type="SUPFAM" id="SSF57362">
    <property type="entry name" value="BPTI-like"/>
    <property type="match status" value="1"/>
</dbReference>
<dbReference type="PROSITE" id="PS00280">
    <property type="entry name" value="BPTI_KUNITZ_1"/>
    <property type="match status" value="1"/>
</dbReference>
<dbReference type="PROSITE" id="PS50279">
    <property type="entry name" value="BPTI_KUNITZ_2"/>
    <property type="match status" value="1"/>
</dbReference>
<gene>
    <name evidence="7" type="primary">iq2c1</name>
</gene>